<keyword id="KW-0963">Cytoplasm</keyword>
<keyword id="KW-0489">Methyltransferase</keyword>
<keyword id="KW-1185">Reference proteome</keyword>
<keyword id="KW-0949">S-adenosyl-L-methionine</keyword>
<keyword id="KW-0808">Transferase</keyword>
<name>PIMT2_SHESH</name>
<sequence>MGKLLFLFITLILFEQQSLAALPTGDSEKYLRARESMVQNQLSTRDIKDKRVLTAMREVPRHLFVPDLLVFKAYTDSPLPIGEGQTISQPYIVALMTELLELTGSERVLEIGTGSGYQAAVLSQVAKEVFTIEIKEKLCTKAGKLLDSLGYTNIQARCGDGYFGWNKEAPFDAIMITAAVDHVPPPLLAQLKDGGRLVLPLGNPFSYQNLVLVTRKGDDYRVWQISGVLFVPMTGHALKDSGEK</sequence>
<protein>
    <recommendedName>
        <fullName evidence="1">Protein-L-isoaspartate O-methyltransferase 2</fullName>
        <ecNumber evidence="1">2.1.1.77</ecNumber>
    </recommendedName>
    <alternativeName>
        <fullName evidence="1">L-isoaspartyl protein carboxyl methyltransferase 2</fullName>
    </alternativeName>
    <alternativeName>
        <fullName evidence="1">Protein L-isoaspartyl methyltransferase 2</fullName>
    </alternativeName>
    <alternativeName>
        <fullName evidence="1">Protein-beta-aspartate methyltransferase 2</fullName>
        <shortName evidence="1">PIMT 2</shortName>
    </alternativeName>
</protein>
<dbReference type="EC" id="2.1.1.77" evidence="1"/>
<dbReference type="EMBL" id="CP000821">
    <property type="protein sequence ID" value="ABV37397.1"/>
    <property type="molecule type" value="Genomic_DNA"/>
</dbReference>
<dbReference type="RefSeq" id="WP_012143127.1">
    <property type="nucleotide sequence ID" value="NC_009831.1"/>
</dbReference>
<dbReference type="SMR" id="A8FX24"/>
<dbReference type="STRING" id="425104.Ssed_2790"/>
<dbReference type="KEGG" id="sse:Ssed_2790"/>
<dbReference type="eggNOG" id="COG2518">
    <property type="taxonomic scope" value="Bacteria"/>
</dbReference>
<dbReference type="HOGENOM" id="CLU_055432_2_0_6"/>
<dbReference type="OrthoDB" id="9810066at2"/>
<dbReference type="Proteomes" id="UP000002015">
    <property type="component" value="Chromosome"/>
</dbReference>
<dbReference type="GO" id="GO:0005737">
    <property type="term" value="C:cytoplasm"/>
    <property type="evidence" value="ECO:0007669"/>
    <property type="project" value="UniProtKB-SubCell"/>
</dbReference>
<dbReference type="GO" id="GO:0004719">
    <property type="term" value="F:protein-L-isoaspartate (D-aspartate) O-methyltransferase activity"/>
    <property type="evidence" value="ECO:0007669"/>
    <property type="project" value="UniProtKB-UniRule"/>
</dbReference>
<dbReference type="GO" id="GO:0032259">
    <property type="term" value="P:methylation"/>
    <property type="evidence" value="ECO:0007669"/>
    <property type="project" value="UniProtKB-KW"/>
</dbReference>
<dbReference type="GO" id="GO:0036211">
    <property type="term" value="P:protein modification process"/>
    <property type="evidence" value="ECO:0007669"/>
    <property type="project" value="UniProtKB-UniRule"/>
</dbReference>
<dbReference type="GO" id="GO:0030091">
    <property type="term" value="P:protein repair"/>
    <property type="evidence" value="ECO:0007669"/>
    <property type="project" value="UniProtKB-UniRule"/>
</dbReference>
<dbReference type="CDD" id="cd02440">
    <property type="entry name" value="AdoMet_MTases"/>
    <property type="match status" value="1"/>
</dbReference>
<dbReference type="FunFam" id="3.40.50.150:FF:000010">
    <property type="entry name" value="Protein-L-isoaspartate O-methyltransferase"/>
    <property type="match status" value="1"/>
</dbReference>
<dbReference type="Gene3D" id="3.40.50.150">
    <property type="entry name" value="Vaccinia Virus protein VP39"/>
    <property type="match status" value="1"/>
</dbReference>
<dbReference type="HAMAP" id="MF_00090">
    <property type="entry name" value="PIMT"/>
    <property type="match status" value="1"/>
</dbReference>
<dbReference type="InterPro" id="IPR000682">
    <property type="entry name" value="PCMT"/>
</dbReference>
<dbReference type="InterPro" id="IPR029063">
    <property type="entry name" value="SAM-dependent_MTases_sf"/>
</dbReference>
<dbReference type="NCBIfam" id="TIGR00080">
    <property type="entry name" value="pimt"/>
    <property type="match status" value="1"/>
</dbReference>
<dbReference type="NCBIfam" id="NF001453">
    <property type="entry name" value="PRK00312.1"/>
    <property type="match status" value="1"/>
</dbReference>
<dbReference type="PANTHER" id="PTHR11579">
    <property type="entry name" value="PROTEIN-L-ISOASPARTATE O-METHYLTRANSFERASE"/>
    <property type="match status" value="1"/>
</dbReference>
<dbReference type="PANTHER" id="PTHR11579:SF0">
    <property type="entry name" value="PROTEIN-L-ISOASPARTATE(D-ASPARTATE) O-METHYLTRANSFERASE"/>
    <property type="match status" value="1"/>
</dbReference>
<dbReference type="Pfam" id="PF01135">
    <property type="entry name" value="PCMT"/>
    <property type="match status" value="1"/>
</dbReference>
<dbReference type="SUPFAM" id="SSF53335">
    <property type="entry name" value="S-adenosyl-L-methionine-dependent methyltransferases"/>
    <property type="match status" value="1"/>
</dbReference>
<dbReference type="PROSITE" id="PS01279">
    <property type="entry name" value="PCMT"/>
    <property type="match status" value="1"/>
</dbReference>
<reference key="1">
    <citation type="submission" date="2007-08" db="EMBL/GenBank/DDBJ databases">
        <title>Complete sequence of Shewanella sediminis HAW-EB3.</title>
        <authorList>
            <consortium name="US DOE Joint Genome Institute"/>
            <person name="Copeland A."/>
            <person name="Lucas S."/>
            <person name="Lapidus A."/>
            <person name="Barry K."/>
            <person name="Glavina del Rio T."/>
            <person name="Dalin E."/>
            <person name="Tice H."/>
            <person name="Pitluck S."/>
            <person name="Chertkov O."/>
            <person name="Brettin T."/>
            <person name="Bruce D."/>
            <person name="Detter J.C."/>
            <person name="Han C."/>
            <person name="Schmutz J."/>
            <person name="Larimer F."/>
            <person name="Land M."/>
            <person name="Hauser L."/>
            <person name="Kyrpides N."/>
            <person name="Kim E."/>
            <person name="Zhao J.-S."/>
            <person name="Richardson P."/>
        </authorList>
    </citation>
    <scope>NUCLEOTIDE SEQUENCE [LARGE SCALE GENOMIC DNA]</scope>
    <source>
        <strain>HAW-EB3</strain>
    </source>
</reference>
<accession>A8FX24</accession>
<evidence type="ECO:0000255" key="1">
    <source>
        <dbReference type="HAMAP-Rule" id="MF_00090"/>
    </source>
</evidence>
<comment type="function">
    <text evidence="1">Catalyzes the methyl esterification of L-isoaspartyl residues in peptides and proteins that result from spontaneous decomposition of normal L-aspartyl and L-asparaginyl residues. It plays a role in the repair and/or degradation of damaged proteins.</text>
</comment>
<comment type="catalytic activity">
    <reaction evidence="1">
        <text>[protein]-L-isoaspartate + S-adenosyl-L-methionine = [protein]-L-isoaspartate alpha-methyl ester + S-adenosyl-L-homocysteine</text>
        <dbReference type="Rhea" id="RHEA:12705"/>
        <dbReference type="Rhea" id="RHEA-COMP:12143"/>
        <dbReference type="Rhea" id="RHEA-COMP:12144"/>
        <dbReference type="ChEBI" id="CHEBI:57856"/>
        <dbReference type="ChEBI" id="CHEBI:59789"/>
        <dbReference type="ChEBI" id="CHEBI:90596"/>
        <dbReference type="ChEBI" id="CHEBI:90598"/>
        <dbReference type="EC" id="2.1.1.77"/>
    </reaction>
</comment>
<comment type="subcellular location">
    <subcellularLocation>
        <location evidence="1">Cytoplasm</location>
    </subcellularLocation>
</comment>
<comment type="similarity">
    <text evidence="1">Belongs to the methyltransferase superfamily. L-isoaspartyl/D-aspartyl protein methyltransferase family.</text>
</comment>
<proteinExistence type="inferred from homology"/>
<organism>
    <name type="scientific">Shewanella sediminis (strain HAW-EB3)</name>
    <dbReference type="NCBI Taxonomy" id="425104"/>
    <lineage>
        <taxon>Bacteria</taxon>
        <taxon>Pseudomonadati</taxon>
        <taxon>Pseudomonadota</taxon>
        <taxon>Gammaproteobacteria</taxon>
        <taxon>Alteromonadales</taxon>
        <taxon>Shewanellaceae</taxon>
        <taxon>Shewanella</taxon>
    </lineage>
</organism>
<gene>
    <name evidence="1" type="primary">pcm2</name>
    <name type="ordered locus">Ssed_2790</name>
</gene>
<feature type="chain" id="PRO_0000351937" description="Protein-L-isoaspartate O-methyltransferase 2">
    <location>
        <begin position="1"/>
        <end position="244"/>
    </location>
</feature>
<feature type="active site" evidence="1">
    <location>
        <position position="88"/>
    </location>
</feature>